<gene>
    <name evidence="1" type="primary">fliE</name>
    <name type="ordered locus">Spro_2946</name>
</gene>
<organism>
    <name type="scientific">Serratia proteamaculans (strain 568)</name>
    <dbReference type="NCBI Taxonomy" id="399741"/>
    <lineage>
        <taxon>Bacteria</taxon>
        <taxon>Pseudomonadati</taxon>
        <taxon>Pseudomonadota</taxon>
        <taxon>Gammaproteobacteria</taxon>
        <taxon>Enterobacterales</taxon>
        <taxon>Yersiniaceae</taxon>
        <taxon>Serratia</taxon>
    </lineage>
</organism>
<dbReference type="EMBL" id="CP000826">
    <property type="protein sequence ID" value="ABV42047.1"/>
    <property type="molecule type" value="Genomic_DNA"/>
</dbReference>
<dbReference type="SMR" id="A8GG07"/>
<dbReference type="STRING" id="399741.Spro_2946"/>
<dbReference type="KEGG" id="spe:Spro_2946"/>
<dbReference type="eggNOG" id="COG1677">
    <property type="taxonomic scope" value="Bacteria"/>
</dbReference>
<dbReference type="HOGENOM" id="CLU_147249_0_2_6"/>
<dbReference type="OrthoDB" id="8909229at2"/>
<dbReference type="GO" id="GO:0009425">
    <property type="term" value="C:bacterial-type flagellum basal body"/>
    <property type="evidence" value="ECO:0007669"/>
    <property type="project" value="UniProtKB-SubCell"/>
</dbReference>
<dbReference type="GO" id="GO:0003774">
    <property type="term" value="F:cytoskeletal motor activity"/>
    <property type="evidence" value="ECO:0007669"/>
    <property type="project" value="InterPro"/>
</dbReference>
<dbReference type="GO" id="GO:0005198">
    <property type="term" value="F:structural molecule activity"/>
    <property type="evidence" value="ECO:0007669"/>
    <property type="project" value="InterPro"/>
</dbReference>
<dbReference type="GO" id="GO:0071973">
    <property type="term" value="P:bacterial-type flagellum-dependent cell motility"/>
    <property type="evidence" value="ECO:0007669"/>
    <property type="project" value="InterPro"/>
</dbReference>
<dbReference type="HAMAP" id="MF_00724">
    <property type="entry name" value="FliE"/>
    <property type="match status" value="1"/>
</dbReference>
<dbReference type="InterPro" id="IPR001624">
    <property type="entry name" value="FliE"/>
</dbReference>
<dbReference type="NCBIfam" id="TIGR00205">
    <property type="entry name" value="fliE"/>
    <property type="match status" value="1"/>
</dbReference>
<dbReference type="PANTHER" id="PTHR34653">
    <property type="match status" value="1"/>
</dbReference>
<dbReference type="PANTHER" id="PTHR34653:SF1">
    <property type="entry name" value="FLAGELLAR HOOK-BASAL BODY COMPLEX PROTEIN FLIE"/>
    <property type="match status" value="1"/>
</dbReference>
<dbReference type="Pfam" id="PF02049">
    <property type="entry name" value="FliE"/>
    <property type="match status" value="1"/>
</dbReference>
<dbReference type="PRINTS" id="PR01006">
    <property type="entry name" value="FLGHOOKFLIE"/>
</dbReference>
<name>FLIE_SERP5</name>
<evidence type="ECO:0000255" key="1">
    <source>
        <dbReference type="HAMAP-Rule" id="MF_00724"/>
    </source>
</evidence>
<feature type="chain" id="PRO_1000062096" description="Flagellar hook-basal body complex protein FliE">
    <location>
        <begin position="1"/>
        <end position="104"/>
    </location>
</feature>
<reference key="1">
    <citation type="submission" date="2007-09" db="EMBL/GenBank/DDBJ databases">
        <title>Complete sequence of chromosome of Serratia proteamaculans 568.</title>
        <authorList>
            <consortium name="US DOE Joint Genome Institute"/>
            <person name="Copeland A."/>
            <person name="Lucas S."/>
            <person name="Lapidus A."/>
            <person name="Barry K."/>
            <person name="Glavina del Rio T."/>
            <person name="Dalin E."/>
            <person name="Tice H."/>
            <person name="Pitluck S."/>
            <person name="Chain P."/>
            <person name="Malfatti S."/>
            <person name="Shin M."/>
            <person name="Vergez L."/>
            <person name="Schmutz J."/>
            <person name="Larimer F."/>
            <person name="Land M."/>
            <person name="Hauser L."/>
            <person name="Kyrpides N."/>
            <person name="Kim E."/>
            <person name="Taghavi S."/>
            <person name="Newman L."/>
            <person name="Vangronsveld J."/>
            <person name="van der Lelie D."/>
            <person name="Richardson P."/>
        </authorList>
    </citation>
    <scope>NUCLEOTIDE SEQUENCE [LARGE SCALE GENOMIC DNA]</scope>
    <source>
        <strain>568</strain>
    </source>
</reference>
<proteinExistence type="inferred from homology"/>
<sequence length="104" mass="10974">MAIQGIEGVLQQLQATAIQAGQMDRGAAAPGVSFASELKTAIGKISDTQQAARKQAQDFEIGVPGISLNDVLVDLQKSSISLQMGVQVRNKLVSAYQEVMNMAV</sequence>
<protein>
    <recommendedName>
        <fullName evidence="1">Flagellar hook-basal body complex protein FliE</fullName>
    </recommendedName>
</protein>
<keyword id="KW-0975">Bacterial flagellum</keyword>
<accession>A8GG07</accession>
<comment type="subcellular location">
    <subcellularLocation>
        <location evidence="1">Bacterial flagellum basal body</location>
    </subcellularLocation>
</comment>
<comment type="similarity">
    <text evidence="1">Belongs to the FliE family.</text>
</comment>